<evidence type="ECO:0000255" key="1">
    <source>
        <dbReference type="HAMAP-Rule" id="MF_01220"/>
    </source>
</evidence>
<evidence type="ECO:0000305" key="2"/>
<dbReference type="EC" id="2.7.4.22" evidence="1"/>
<dbReference type="EMBL" id="AE016827">
    <property type="protein sequence ID" value="AAU38537.1"/>
    <property type="status" value="ALT_INIT"/>
    <property type="molecule type" value="Genomic_DNA"/>
</dbReference>
<dbReference type="RefSeq" id="WP_041640013.1">
    <property type="nucleotide sequence ID" value="NC_006300.1"/>
</dbReference>
<dbReference type="SMR" id="Q65R73"/>
<dbReference type="STRING" id="221988.MS1930"/>
<dbReference type="KEGG" id="msu:MS1930"/>
<dbReference type="eggNOG" id="COG0528">
    <property type="taxonomic scope" value="Bacteria"/>
</dbReference>
<dbReference type="HOGENOM" id="CLU_033861_0_0_6"/>
<dbReference type="OrthoDB" id="9807458at2"/>
<dbReference type="UniPathway" id="UPA00159">
    <property type="reaction ID" value="UER00275"/>
</dbReference>
<dbReference type="Proteomes" id="UP000000607">
    <property type="component" value="Chromosome"/>
</dbReference>
<dbReference type="GO" id="GO:0005829">
    <property type="term" value="C:cytosol"/>
    <property type="evidence" value="ECO:0007669"/>
    <property type="project" value="TreeGrafter"/>
</dbReference>
<dbReference type="GO" id="GO:0005524">
    <property type="term" value="F:ATP binding"/>
    <property type="evidence" value="ECO:0007669"/>
    <property type="project" value="UniProtKB-KW"/>
</dbReference>
<dbReference type="GO" id="GO:0033862">
    <property type="term" value="F:UMP kinase activity"/>
    <property type="evidence" value="ECO:0007669"/>
    <property type="project" value="UniProtKB-EC"/>
</dbReference>
<dbReference type="GO" id="GO:0044210">
    <property type="term" value="P:'de novo' CTP biosynthetic process"/>
    <property type="evidence" value="ECO:0007669"/>
    <property type="project" value="UniProtKB-UniRule"/>
</dbReference>
<dbReference type="GO" id="GO:0006225">
    <property type="term" value="P:UDP biosynthetic process"/>
    <property type="evidence" value="ECO:0007669"/>
    <property type="project" value="TreeGrafter"/>
</dbReference>
<dbReference type="CDD" id="cd04254">
    <property type="entry name" value="AAK_UMPK-PyrH-Ec"/>
    <property type="match status" value="1"/>
</dbReference>
<dbReference type="FunFam" id="3.40.1160.10:FF:000001">
    <property type="entry name" value="Uridylate kinase"/>
    <property type="match status" value="1"/>
</dbReference>
<dbReference type="Gene3D" id="3.40.1160.10">
    <property type="entry name" value="Acetylglutamate kinase-like"/>
    <property type="match status" value="1"/>
</dbReference>
<dbReference type="HAMAP" id="MF_01220_B">
    <property type="entry name" value="PyrH_B"/>
    <property type="match status" value="1"/>
</dbReference>
<dbReference type="InterPro" id="IPR036393">
    <property type="entry name" value="AceGlu_kinase-like_sf"/>
</dbReference>
<dbReference type="InterPro" id="IPR001048">
    <property type="entry name" value="Asp/Glu/Uridylate_kinase"/>
</dbReference>
<dbReference type="InterPro" id="IPR011817">
    <property type="entry name" value="Uridylate_kinase"/>
</dbReference>
<dbReference type="InterPro" id="IPR015963">
    <property type="entry name" value="Uridylate_kinase_bac"/>
</dbReference>
<dbReference type="NCBIfam" id="TIGR02075">
    <property type="entry name" value="pyrH_bact"/>
    <property type="match status" value="1"/>
</dbReference>
<dbReference type="PANTHER" id="PTHR42833">
    <property type="entry name" value="URIDYLATE KINASE"/>
    <property type="match status" value="1"/>
</dbReference>
<dbReference type="PANTHER" id="PTHR42833:SF4">
    <property type="entry name" value="URIDYLATE KINASE PUMPKIN, CHLOROPLASTIC"/>
    <property type="match status" value="1"/>
</dbReference>
<dbReference type="Pfam" id="PF00696">
    <property type="entry name" value="AA_kinase"/>
    <property type="match status" value="1"/>
</dbReference>
<dbReference type="PIRSF" id="PIRSF005650">
    <property type="entry name" value="Uridylate_kin"/>
    <property type="match status" value="1"/>
</dbReference>
<dbReference type="SUPFAM" id="SSF53633">
    <property type="entry name" value="Carbamate kinase-like"/>
    <property type="match status" value="1"/>
</dbReference>
<proteinExistence type="inferred from homology"/>
<accession>Q65R73</accession>
<organism>
    <name type="scientific">Mannheimia succiniciproducens (strain KCTC 0769BP / MBEL55E)</name>
    <dbReference type="NCBI Taxonomy" id="221988"/>
    <lineage>
        <taxon>Bacteria</taxon>
        <taxon>Pseudomonadati</taxon>
        <taxon>Pseudomonadota</taxon>
        <taxon>Gammaproteobacteria</taxon>
        <taxon>Pasteurellales</taxon>
        <taxon>Pasteurellaceae</taxon>
        <taxon>Basfia</taxon>
    </lineage>
</organism>
<sequence length="237" mass="25696">MNKPIYKRILLKLSGEALQGDEGFGIDPSILDRMALEIKELIAMDVEVGVVIGGGNLFRGAKLAKAGMNRVVGDHMGMLATVMNGLAMRDALHRADVNAKLMSAFQLNGICDTYNWSEAIKMLREKRVVIFSAGTGSPFFTTDSAACLRGIEIEADVVLKATKVDGVYNCDPAKNPDAKLFNKLTYAEVIDKELQVMDLAAFTLARDHGMPIRVFNMGKPGALREVVTGETEGTIIS</sequence>
<protein>
    <recommendedName>
        <fullName evidence="1">Uridylate kinase</fullName>
        <shortName evidence="1">UK</shortName>
        <ecNumber evidence="1">2.7.4.22</ecNumber>
    </recommendedName>
    <alternativeName>
        <fullName evidence="1">Uridine monophosphate kinase</fullName>
        <shortName evidence="1">UMP kinase</shortName>
        <shortName evidence="1">UMPK</shortName>
    </alternativeName>
</protein>
<name>PYRH_MANSM</name>
<keyword id="KW-0021">Allosteric enzyme</keyword>
<keyword id="KW-0067">ATP-binding</keyword>
<keyword id="KW-0963">Cytoplasm</keyword>
<keyword id="KW-0418">Kinase</keyword>
<keyword id="KW-0547">Nucleotide-binding</keyword>
<keyword id="KW-0665">Pyrimidine biosynthesis</keyword>
<keyword id="KW-0808">Transferase</keyword>
<gene>
    <name evidence="1" type="primary">pyrH</name>
    <name type="ordered locus">MS1930</name>
</gene>
<reference key="1">
    <citation type="journal article" date="2004" name="Nat. Biotechnol.">
        <title>The genome sequence of the capnophilic rumen bacterium Mannheimia succiniciproducens.</title>
        <authorList>
            <person name="Hong S.H."/>
            <person name="Kim J.S."/>
            <person name="Lee S.Y."/>
            <person name="In Y.H."/>
            <person name="Choi S.S."/>
            <person name="Rih J.-K."/>
            <person name="Kim C.H."/>
            <person name="Jeong H."/>
            <person name="Hur C.G."/>
            <person name="Kim J.J."/>
        </authorList>
    </citation>
    <scope>NUCLEOTIDE SEQUENCE [LARGE SCALE GENOMIC DNA]</scope>
    <source>
        <strain>KCTC 0769BP / MBEL55E</strain>
    </source>
</reference>
<comment type="function">
    <text evidence="1">Catalyzes the reversible phosphorylation of UMP to UDP.</text>
</comment>
<comment type="catalytic activity">
    <reaction evidence="1">
        <text>UMP + ATP = UDP + ADP</text>
        <dbReference type="Rhea" id="RHEA:24400"/>
        <dbReference type="ChEBI" id="CHEBI:30616"/>
        <dbReference type="ChEBI" id="CHEBI:57865"/>
        <dbReference type="ChEBI" id="CHEBI:58223"/>
        <dbReference type="ChEBI" id="CHEBI:456216"/>
        <dbReference type="EC" id="2.7.4.22"/>
    </reaction>
</comment>
<comment type="activity regulation">
    <text evidence="1">Allosterically activated by GTP. Inhibited by UTP.</text>
</comment>
<comment type="pathway">
    <text evidence="1">Pyrimidine metabolism; CTP biosynthesis via de novo pathway; UDP from UMP (UMPK route): step 1/1.</text>
</comment>
<comment type="subunit">
    <text evidence="1">Homohexamer.</text>
</comment>
<comment type="subcellular location">
    <subcellularLocation>
        <location evidence="1">Cytoplasm</location>
    </subcellularLocation>
</comment>
<comment type="similarity">
    <text evidence="1">Belongs to the UMP kinase family.</text>
</comment>
<comment type="sequence caution" evidence="2">
    <conflict type="erroneous initiation">
        <sequence resource="EMBL-CDS" id="AAU38537"/>
    </conflict>
</comment>
<feature type="chain" id="PRO_0000323879" description="Uridylate kinase">
    <location>
        <begin position="1"/>
        <end position="237"/>
    </location>
</feature>
<feature type="region of interest" description="Involved in allosteric activation by GTP" evidence="1">
    <location>
        <begin position="20"/>
        <end position="25"/>
    </location>
</feature>
<feature type="binding site" evidence="1">
    <location>
        <begin position="12"/>
        <end position="15"/>
    </location>
    <ligand>
        <name>ATP</name>
        <dbReference type="ChEBI" id="CHEBI:30616"/>
    </ligand>
</feature>
<feature type="binding site" evidence="1">
    <location>
        <position position="54"/>
    </location>
    <ligand>
        <name>UMP</name>
        <dbReference type="ChEBI" id="CHEBI:57865"/>
    </ligand>
</feature>
<feature type="binding site" evidence="1">
    <location>
        <position position="55"/>
    </location>
    <ligand>
        <name>ATP</name>
        <dbReference type="ChEBI" id="CHEBI:30616"/>
    </ligand>
</feature>
<feature type="binding site" evidence="1">
    <location>
        <position position="59"/>
    </location>
    <ligand>
        <name>ATP</name>
        <dbReference type="ChEBI" id="CHEBI:30616"/>
    </ligand>
</feature>
<feature type="binding site" evidence="1">
    <location>
        <position position="74"/>
    </location>
    <ligand>
        <name>UMP</name>
        <dbReference type="ChEBI" id="CHEBI:57865"/>
    </ligand>
</feature>
<feature type="binding site" evidence="1">
    <location>
        <begin position="135"/>
        <end position="142"/>
    </location>
    <ligand>
        <name>UMP</name>
        <dbReference type="ChEBI" id="CHEBI:57865"/>
    </ligand>
</feature>
<feature type="binding site" evidence="1">
    <location>
        <position position="162"/>
    </location>
    <ligand>
        <name>ATP</name>
        <dbReference type="ChEBI" id="CHEBI:30616"/>
    </ligand>
</feature>
<feature type="binding site" evidence="1">
    <location>
        <position position="168"/>
    </location>
    <ligand>
        <name>ATP</name>
        <dbReference type="ChEBI" id="CHEBI:30616"/>
    </ligand>
</feature>
<feature type="binding site" evidence="1">
    <location>
        <position position="171"/>
    </location>
    <ligand>
        <name>ATP</name>
        <dbReference type="ChEBI" id="CHEBI:30616"/>
    </ligand>
</feature>